<reference key="1">
    <citation type="submission" date="2007-06" db="EMBL/GenBank/DDBJ databases">
        <title>Complete sequence of chromosome of Staphylococcus aureus subsp. aureus JH1.</title>
        <authorList>
            <consortium name="US DOE Joint Genome Institute"/>
            <person name="Copeland A."/>
            <person name="Lucas S."/>
            <person name="Lapidus A."/>
            <person name="Barry K."/>
            <person name="Detter J.C."/>
            <person name="Glavina del Rio T."/>
            <person name="Hammon N."/>
            <person name="Israni S."/>
            <person name="Dalin E."/>
            <person name="Tice H."/>
            <person name="Pitluck S."/>
            <person name="Chain P."/>
            <person name="Malfatti S."/>
            <person name="Shin M."/>
            <person name="Vergez L."/>
            <person name="Schmutz J."/>
            <person name="Larimer F."/>
            <person name="Land M."/>
            <person name="Hauser L."/>
            <person name="Kyrpides N."/>
            <person name="Ivanova N."/>
            <person name="Tomasz A."/>
            <person name="Richardson P."/>
        </authorList>
    </citation>
    <scope>NUCLEOTIDE SEQUENCE [LARGE SCALE GENOMIC DNA]</scope>
    <source>
        <strain>JH1</strain>
    </source>
</reference>
<sequence length="538" mass="57572">MVKQLKFSEDARQAMLRGVDQLANAVKVTIGPKGRNVVLDKEFTAPLITNDGVTIAKEIELEDPYENMGAKLVQEVANKTNEIAGDGTTTATVLAQAMIQEGLKNVTSGANPVGLRQGIDKAVKVAVEALHENSQKVENKNEIAQVGAISAADEEIGRYISEAMEKVGNDGVITIEESNGLNTELEVVEGMQFDRGYQSPYMVTDSDKMVAELERPYILVTDKKISSFQDILPLLEQVVQSNRPILIVADEVEGDALTNIVLNRMRGTFTAVAVKAPGFGDRRKAMLEDLAILTGAQVITDDLGLDLKDASIDMLGTASKVEVTKDNTTVVDGDGDENSIDARVSQLKSQIEETESDFDREKLQERLAKLAGGVAVIKVGAASETELKERKLRIEDALNSTRAAVEEGIVAGGGTALVNVYQKVSEIEAEGDIETGVNIVLKALTAPVRQIAENAGLEGSVIVERLKNAEPGVGFNAATNEWVNMLEAGIVDPTKVTRSALQHAASVAAMFLTTEAVVASIPEKNNDQPNMGGMPGMM</sequence>
<organism>
    <name type="scientific">Staphylococcus aureus (strain JH1)</name>
    <dbReference type="NCBI Taxonomy" id="359787"/>
    <lineage>
        <taxon>Bacteria</taxon>
        <taxon>Bacillati</taxon>
        <taxon>Bacillota</taxon>
        <taxon>Bacilli</taxon>
        <taxon>Bacillales</taxon>
        <taxon>Staphylococcaceae</taxon>
        <taxon>Staphylococcus</taxon>
    </lineage>
</organism>
<proteinExistence type="inferred from homology"/>
<keyword id="KW-0067">ATP-binding</keyword>
<keyword id="KW-0143">Chaperone</keyword>
<keyword id="KW-0963">Cytoplasm</keyword>
<keyword id="KW-0413">Isomerase</keyword>
<keyword id="KW-0547">Nucleotide-binding</keyword>
<comment type="function">
    <text evidence="1">Together with its co-chaperonin GroES, plays an essential role in assisting protein folding. The GroEL-GroES system forms a nano-cage that allows encapsulation of the non-native substrate proteins and provides a physical environment optimized to promote and accelerate protein folding.</text>
</comment>
<comment type="catalytic activity">
    <reaction evidence="1">
        <text>ATP + H2O + a folded polypeptide = ADP + phosphate + an unfolded polypeptide.</text>
        <dbReference type="EC" id="5.6.1.7"/>
    </reaction>
</comment>
<comment type="subunit">
    <text evidence="1">Forms a cylinder of 14 subunits composed of two heptameric rings stacked back-to-back. Interacts with the co-chaperonin GroES.</text>
</comment>
<comment type="subcellular location">
    <subcellularLocation>
        <location evidence="1">Cytoplasm</location>
    </subcellularLocation>
</comment>
<comment type="similarity">
    <text evidence="1">Belongs to the chaperonin (HSP60) family.</text>
</comment>
<gene>
    <name evidence="1" type="primary">groEL</name>
    <name evidence="1" type="synonym">groL</name>
    <name type="ordered locus">SaurJH1_2103</name>
</gene>
<dbReference type="EC" id="5.6.1.7" evidence="1"/>
<dbReference type="EMBL" id="CP000736">
    <property type="protein sequence ID" value="ABR52933.1"/>
    <property type="molecule type" value="Genomic_DNA"/>
</dbReference>
<dbReference type="SMR" id="A6U3B5"/>
<dbReference type="KEGG" id="sah:SaurJH1_2103"/>
<dbReference type="HOGENOM" id="CLU_016503_3_0_9"/>
<dbReference type="GO" id="GO:0005737">
    <property type="term" value="C:cytoplasm"/>
    <property type="evidence" value="ECO:0007669"/>
    <property type="project" value="UniProtKB-SubCell"/>
</dbReference>
<dbReference type="GO" id="GO:0005524">
    <property type="term" value="F:ATP binding"/>
    <property type="evidence" value="ECO:0007669"/>
    <property type="project" value="UniProtKB-UniRule"/>
</dbReference>
<dbReference type="GO" id="GO:0140662">
    <property type="term" value="F:ATP-dependent protein folding chaperone"/>
    <property type="evidence" value="ECO:0007669"/>
    <property type="project" value="InterPro"/>
</dbReference>
<dbReference type="GO" id="GO:0016853">
    <property type="term" value="F:isomerase activity"/>
    <property type="evidence" value="ECO:0007669"/>
    <property type="project" value="UniProtKB-KW"/>
</dbReference>
<dbReference type="GO" id="GO:0051082">
    <property type="term" value="F:unfolded protein binding"/>
    <property type="evidence" value="ECO:0007669"/>
    <property type="project" value="UniProtKB-UniRule"/>
</dbReference>
<dbReference type="GO" id="GO:0042026">
    <property type="term" value="P:protein refolding"/>
    <property type="evidence" value="ECO:0007669"/>
    <property type="project" value="UniProtKB-UniRule"/>
</dbReference>
<dbReference type="CDD" id="cd03344">
    <property type="entry name" value="GroEL"/>
    <property type="match status" value="1"/>
</dbReference>
<dbReference type="FunFam" id="1.10.560.10:FF:000001">
    <property type="entry name" value="60 kDa chaperonin"/>
    <property type="match status" value="1"/>
</dbReference>
<dbReference type="FunFam" id="3.50.7.10:FF:000001">
    <property type="entry name" value="60 kDa chaperonin"/>
    <property type="match status" value="1"/>
</dbReference>
<dbReference type="Gene3D" id="3.50.7.10">
    <property type="entry name" value="GroEL"/>
    <property type="match status" value="1"/>
</dbReference>
<dbReference type="Gene3D" id="1.10.560.10">
    <property type="entry name" value="GroEL-like equatorial domain"/>
    <property type="match status" value="1"/>
</dbReference>
<dbReference type="Gene3D" id="3.30.260.10">
    <property type="entry name" value="TCP-1-like chaperonin intermediate domain"/>
    <property type="match status" value="1"/>
</dbReference>
<dbReference type="HAMAP" id="MF_00600">
    <property type="entry name" value="CH60"/>
    <property type="match status" value="1"/>
</dbReference>
<dbReference type="InterPro" id="IPR018370">
    <property type="entry name" value="Chaperonin_Cpn60_CS"/>
</dbReference>
<dbReference type="InterPro" id="IPR001844">
    <property type="entry name" value="Cpn60/GroEL"/>
</dbReference>
<dbReference type="InterPro" id="IPR002423">
    <property type="entry name" value="Cpn60/GroEL/TCP-1"/>
</dbReference>
<dbReference type="InterPro" id="IPR027409">
    <property type="entry name" value="GroEL-like_apical_dom_sf"/>
</dbReference>
<dbReference type="InterPro" id="IPR027413">
    <property type="entry name" value="GROEL-like_equatorial_sf"/>
</dbReference>
<dbReference type="InterPro" id="IPR027410">
    <property type="entry name" value="TCP-1-like_intermed_sf"/>
</dbReference>
<dbReference type="NCBIfam" id="TIGR02348">
    <property type="entry name" value="GroEL"/>
    <property type="match status" value="1"/>
</dbReference>
<dbReference type="NCBIfam" id="NF000592">
    <property type="entry name" value="PRK00013.1"/>
    <property type="match status" value="1"/>
</dbReference>
<dbReference type="NCBIfam" id="NF009487">
    <property type="entry name" value="PRK12849.1"/>
    <property type="match status" value="1"/>
</dbReference>
<dbReference type="NCBIfam" id="NF009488">
    <property type="entry name" value="PRK12850.1"/>
    <property type="match status" value="1"/>
</dbReference>
<dbReference type="NCBIfam" id="NF009489">
    <property type="entry name" value="PRK12851.1"/>
    <property type="match status" value="1"/>
</dbReference>
<dbReference type="PANTHER" id="PTHR45633">
    <property type="entry name" value="60 KDA HEAT SHOCK PROTEIN, MITOCHONDRIAL"/>
    <property type="match status" value="1"/>
</dbReference>
<dbReference type="Pfam" id="PF00118">
    <property type="entry name" value="Cpn60_TCP1"/>
    <property type="match status" value="1"/>
</dbReference>
<dbReference type="PRINTS" id="PR00298">
    <property type="entry name" value="CHAPERONIN60"/>
</dbReference>
<dbReference type="SUPFAM" id="SSF52029">
    <property type="entry name" value="GroEL apical domain-like"/>
    <property type="match status" value="1"/>
</dbReference>
<dbReference type="SUPFAM" id="SSF48592">
    <property type="entry name" value="GroEL equatorial domain-like"/>
    <property type="match status" value="1"/>
</dbReference>
<dbReference type="SUPFAM" id="SSF54849">
    <property type="entry name" value="GroEL-intermediate domain like"/>
    <property type="match status" value="1"/>
</dbReference>
<dbReference type="PROSITE" id="PS00296">
    <property type="entry name" value="CHAPERONINS_CPN60"/>
    <property type="match status" value="1"/>
</dbReference>
<evidence type="ECO:0000255" key="1">
    <source>
        <dbReference type="HAMAP-Rule" id="MF_00600"/>
    </source>
</evidence>
<protein>
    <recommendedName>
        <fullName evidence="1">Chaperonin GroEL</fullName>
        <ecNumber evidence="1">5.6.1.7</ecNumber>
    </recommendedName>
    <alternativeName>
        <fullName evidence="1">60 kDa chaperonin</fullName>
    </alternativeName>
    <alternativeName>
        <fullName evidence="1">Chaperonin-60</fullName>
        <shortName evidence="1">Cpn60</shortName>
    </alternativeName>
</protein>
<name>CH60_STAA2</name>
<feature type="chain" id="PRO_1000082491" description="Chaperonin GroEL">
    <location>
        <begin position="1"/>
        <end position="538"/>
    </location>
</feature>
<feature type="binding site" evidence="1">
    <location>
        <begin position="29"/>
        <end position="32"/>
    </location>
    <ligand>
        <name>ATP</name>
        <dbReference type="ChEBI" id="CHEBI:30616"/>
    </ligand>
</feature>
<feature type="binding site" evidence="1">
    <location>
        <begin position="86"/>
        <end position="90"/>
    </location>
    <ligand>
        <name>ATP</name>
        <dbReference type="ChEBI" id="CHEBI:30616"/>
    </ligand>
</feature>
<feature type="binding site" evidence="1">
    <location>
        <position position="413"/>
    </location>
    <ligand>
        <name>ATP</name>
        <dbReference type="ChEBI" id="CHEBI:30616"/>
    </ligand>
</feature>
<feature type="binding site" evidence="1">
    <location>
        <begin position="476"/>
        <end position="478"/>
    </location>
    <ligand>
        <name>ATP</name>
        <dbReference type="ChEBI" id="CHEBI:30616"/>
    </ligand>
</feature>
<feature type="binding site" evidence="1">
    <location>
        <position position="492"/>
    </location>
    <ligand>
        <name>ATP</name>
        <dbReference type="ChEBI" id="CHEBI:30616"/>
    </ligand>
</feature>
<accession>A6U3B5</accession>